<keyword id="KW-0217">Developmental protein</keyword>
<keyword id="KW-0238">DNA-binding</keyword>
<keyword id="KW-0371">Homeobox</keyword>
<keyword id="KW-0539">Nucleus</keyword>
<keyword id="KW-1185">Reference proteome</keyword>
<keyword id="KW-0804">Transcription</keyword>
<keyword id="KW-0805">Transcription regulation</keyword>
<proteinExistence type="evidence at protein level"/>
<accession>P09024</accession>
<accession>A2A9Z9</accession>
<accession>Q3UW15</accession>
<organism>
    <name type="scientific">Mus musculus</name>
    <name type="common">Mouse</name>
    <dbReference type="NCBI Taxonomy" id="10090"/>
    <lineage>
        <taxon>Eukaryota</taxon>
        <taxon>Metazoa</taxon>
        <taxon>Chordata</taxon>
        <taxon>Craniata</taxon>
        <taxon>Vertebrata</taxon>
        <taxon>Euteleostomi</taxon>
        <taxon>Mammalia</taxon>
        <taxon>Eutheria</taxon>
        <taxon>Euarchontoglires</taxon>
        <taxon>Glires</taxon>
        <taxon>Rodentia</taxon>
        <taxon>Myomorpha</taxon>
        <taxon>Muroidea</taxon>
        <taxon>Muridae</taxon>
        <taxon>Murinae</taxon>
        <taxon>Mus</taxon>
        <taxon>Mus</taxon>
    </lineage>
</organism>
<sequence>MSSLYYANALFSKYPAASSVFAPGAFPEQTSCAFASNPQRPGYGAGPGAPFSASVQGLYSGGGAMAGQSAAGVYAAGYGLEPSSFNMHCAPFEQNLSGVCPGDPAKAAGAKEQRDSDLAAESNFRIYPWMRSSGPDRKRGRQTYTRYQTLELEKEFHYNRYLTRRRRIEIAHTLCLTERQIKIWFQNRRMKWKKENKTSGPGTTGQDKAEAEEEEEE</sequence>
<reference key="1">
    <citation type="journal article" date="1987" name="Nucleic Acids Res.">
        <title>A mouse homeobox containing gene on chromosome 11: sequence and tissue-specific expression.</title>
        <authorList>
            <person name="Meijlink F."/>
            <person name="de Laaf R."/>
            <person name="Verrijzer P."/>
            <person name="Destree O."/>
            <person name="Kroezen V."/>
            <person name="Hilkens J."/>
            <person name="Deschamps J."/>
        </authorList>
    </citation>
    <scope>NUCLEOTIDE SEQUENCE [GENOMIC DNA]</scope>
</reference>
<reference key="2">
    <citation type="journal article" date="1988" name="Nucleic Acids Res.">
        <title>Nucleotide sequence of the Hox2.3 gene region.</title>
        <authorList>
            <person name="Verrijzer P."/>
            <person name="de Graaff W."/>
            <person name="Deschamps J."/>
            <person name="Meijlink F."/>
        </authorList>
    </citation>
    <scope>NUCLEOTIDE SEQUENCE [MRNA]</scope>
</reference>
<reference key="3">
    <citation type="journal article" date="2005" name="Science">
        <title>The transcriptional landscape of the mammalian genome.</title>
        <authorList>
            <person name="Carninci P."/>
            <person name="Kasukawa T."/>
            <person name="Katayama S."/>
            <person name="Gough J."/>
            <person name="Frith M.C."/>
            <person name="Maeda N."/>
            <person name="Oyama R."/>
            <person name="Ravasi T."/>
            <person name="Lenhard B."/>
            <person name="Wells C."/>
            <person name="Kodzius R."/>
            <person name="Shimokawa K."/>
            <person name="Bajic V.B."/>
            <person name="Brenner S.E."/>
            <person name="Batalov S."/>
            <person name="Forrest A.R."/>
            <person name="Zavolan M."/>
            <person name="Davis M.J."/>
            <person name="Wilming L.G."/>
            <person name="Aidinis V."/>
            <person name="Allen J.E."/>
            <person name="Ambesi-Impiombato A."/>
            <person name="Apweiler R."/>
            <person name="Aturaliya R.N."/>
            <person name="Bailey T.L."/>
            <person name="Bansal M."/>
            <person name="Baxter L."/>
            <person name="Beisel K.W."/>
            <person name="Bersano T."/>
            <person name="Bono H."/>
            <person name="Chalk A.M."/>
            <person name="Chiu K.P."/>
            <person name="Choudhary V."/>
            <person name="Christoffels A."/>
            <person name="Clutterbuck D.R."/>
            <person name="Crowe M.L."/>
            <person name="Dalla E."/>
            <person name="Dalrymple B.P."/>
            <person name="de Bono B."/>
            <person name="Della Gatta G."/>
            <person name="di Bernardo D."/>
            <person name="Down T."/>
            <person name="Engstrom P."/>
            <person name="Fagiolini M."/>
            <person name="Faulkner G."/>
            <person name="Fletcher C.F."/>
            <person name="Fukushima T."/>
            <person name="Furuno M."/>
            <person name="Futaki S."/>
            <person name="Gariboldi M."/>
            <person name="Georgii-Hemming P."/>
            <person name="Gingeras T.R."/>
            <person name="Gojobori T."/>
            <person name="Green R.E."/>
            <person name="Gustincich S."/>
            <person name="Harbers M."/>
            <person name="Hayashi Y."/>
            <person name="Hensch T.K."/>
            <person name="Hirokawa N."/>
            <person name="Hill D."/>
            <person name="Huminiecki L."/>
            <person name="Iacono M."/>
            <person name="Ikeo K."/>
            <person name="Iwama A."/>
            <person name="Ishikawa T."/>
            <person name="Jakt M."/>
            <person name="Kanapin A."/>
            <person name="Katoh M."/>
            <person name="Kawasawa Y."/>
            <person name="Kelso J."/>
            <person name="Kitamura H."/>
            <person name="Kitano H."/>
            <person name="Kollias G."/>
            <person name="Krishnan S.P."/>
            <person name="Kruger A."/>
            <person name="Kummerfeld S.K."/>
            <person name="Kurochkin I.V."/>
            <person name="Lareau L.F."/>
            <person name="Lazarevic D."/>
            <person name="Lipovich L."/>
            <person name="Liu J."/>
            <person name="Liuni S."/>
            <person name="McWilliam S."/>
            <person name="Madan Babu M."/>
            <person name="Madera M."/>
            <person name="Marchionni L."/>
            <person name="Matsuda H."/>
            <person name="Matsuzawa S."/>
            <person name="Miki H."/>
            <person name="Mignone F."/>
            <person name="Miyake S."/>
            <person name="Morris K."/>
            <person name="Mottagui-Tabar S."/>
            <person name="Mulder N."/>
            <person name="Nakano N."/>
            <person name="Nakauchi H."/>
            <person name="Ng P."/>
            <person name="Nilsson R."/>
            <person name="Nishiguchi S."/>
            <person name="Nishikawa S."/>
            <person name="Nori F."/>
            <person name="Ohara O."/>
            <person name="Okazaki Y."/>
            <person name="Orlando V."/>
            <person name="Pang K.C."/>
            <person name="Pavan W.J."/>
            <person name="Pavesi G."/>
            <person name="Pesole G."/>
            <person name="Petrovsky N."/>
            <person name="Piazza S."/>
            <person name="Reed J."/>
            <person name="Reid J.F."/>
            <person name="Ring B.Z."/>
            <person name="Ringwald M."/>
            <person name="Rost B."/>
            <person name="Ruan Y."/>
            <person name="Salzberg S.L."/>
            <person name="Sandelin A."/>
            <person name="Schneider C."/>
            <person name="Schoenbach C."/>
            <person name="Sekiguchi K."/>
            <person name="Semple C.A."/>
            <person name="Seno S."/>
            <person name="Sessa L."/>
            <person name="Sheng Y."/>
            <person name="Shibata Y."/>
            <person name="Shimada H."/>
            <person name="Shimada K."/>
            <person name="Silva D."/>
            <person name="Sinclair B."/>
            <person name="Sperling S."/>
            <person name="Stupka E."/>
            <person name="Sugiura K."/>
            <person name="Sultana R."/>
            <person name="Takenaka Y."/>
            <person name="Taki K."/>
            <person name="Tammoja K."/>
            <person name="Tan S.L."/>
            <person name="Tang S."/>
            <person name="Taylor M.S."/>
            <person name="Tegner J."/>
            <person name="Teichmann S.A."/>
            <person name="Ueda H.R."/>
            <person name="van Nimwegen E."/>
            <person name="Verardo R."/>
            <person name="Wei C.L."/>
            <person name="Yagi K."/>
            <person name="Yamanishi H."/>
            <person name="Zabarovsky E."/>
            <person name="Zhu S."/>
            <person name="Zimmer A."/>
            <person name="Hide W."/>
            <person name="Bult C."/>
            <person name="Grimmond S.M."/>
            <person name="Teasdale R.D."/>
            <person name="Liu E.T."/>
            <person name="Brusic V."/>
            <person name="Quackenbush J."/>
            <person name="Wahlestedt C."/>
            <person name="Mattick J.S."/>
            <person name="Hume D.A."/>
            <person name="Kai C."/>
            <person name="Sasaki D."/>
            <person name="Tomaru Y."/>
            <person name="Fukuda S."/>
            <person name="Kanamori-Katayama M."/>
            <person name="Suzuki M."/>
            <person name="Aoki J."/>
            <person name="Arakawa T."/>
            <person name="Iida J."/>
            <person name="Imamura K."/>
            <person name="Itoh M."/>
            <person name="Kato T."/>
            <person name="Kawaji H."/>
            <person name="Kawagashira N."/>
            <person name="Kawashima T."/>
            <person name="Kojima M."/>
            <person name="Kondo S."/>
            <person name="Konno H."/>
            <person name="Nakano K."/>
            <person name="Ninomiya N."/>
            <person name="Nishio T."/>
            <person name="Okada M."/>
            <person name="Plessy C."/>
            <person name="Shibata K."/>
            <person name="Shiraki T."/>
            <person name="Suzuki S."/>
            <person name="Tagami M."/>
            <person name="Waki K."/>
            <person name="Watahiki A."/>
            <person name="Okamura-Oho Y."/>
            <person name="Suzuki H."/>
            <person name="Kawai J."/>
            <person name="Hayashizaki Y."/>
        </authorList>
    </citation>
    <scope>NUCLEOTIDE SEQUENCE [LARGE SCALE MRNA]</scope>
    <source>
        <strain>C57BL/6J</strain>
        <tissue>Epididymis</tissue>
    </source>
</reference>
<reference key="4">
    <citation type="journal article" date="2009" name="PLoS Biol.">
        <title>Lineage-specific biology revealed by a finished genome assembly of the mouse.</title>
        <authorList>
            <person name="Church D.M."/>
            <person name="Goodstadt L."/>
            <person name="Hillier L.W."/>
            <person name="Zody M.C."/>
            <person name="Goldstein S."/>
            <person name="She X."/>
            <person name="Bult C.J."/>
            <person name="Agarwala R."/>
            <person name="Cherry J.L."/>
            <person name="DiCuccio M."/>
            <person name="Hlavina W."/>
            <person name="Kapustin Y."/>
            <person name="Meric P."/>
            <person name="Maglott D."/>
            <person name="Birtle Z."/>
            <person name="Marques A.C."/>
            <person name="Graves T."/>
            <person name="Zhou S."/>
            <person name="Teague B."/>
            <person name="Potamousis K."/>
            <person name="Churas C."/>
            <person name="Place M."/>
            <person name="Herschleb J."/>
            <person name="Runnheim R."/>
            <person name="Forrest D."/>
            <person name="Amos-Landgraf J."/>
            <person name="Schwartz D.C."/>
            <person name="Cheng Z."/>
            <person name="Lindblad-Toh K."/>
            <person name="Eichler E.E."/>
            <person name="Ponting C.P."/>
        </authorList>
    </citation>
    <scope>NUCLEOTIDE SEQUENCE [LARGE SCALE GENOMIC DNA]</scope>
    <source>
        <strain>C57BL/6J</strain>
    </source>
</reference>
<reference key="5">
    <citation type="journal article" date="1987" name="DNA">
        <title>New murine homeoboxes: structure, chromosomal assignment, and differential expression in adult erythropoiesis.</title>
        <authorList>
            <person name="Lonai P."/>
            <person name="Arman E."/>
            <person name="Czosnek H."/>
            <person name="Ruddle F.H."/>
            <person name="Blatt C."/>
        </authorList>
    </citation>
    <scope>NUCLEOTIDE SEQUENCE [GENOMIC DNA] OF 134-217</scope>
</reference>
<reference key="6">
    <citation type="journal article" date="1987" name="Genomics">
        <title>Sequence analysis of the murine Hox-2.2, -2.3, and -2.4 homeo boxes: evolutionary and structural comparisons.</title>
        <authorList>
            <person name="Hart C.P."/>
            <person name="Fainsod A."/>
            <person name="Ruddle F.H."/>
        </authorList>
    </citation>
    <scope>NUCLEOTIDE SEQUENCE [GENOMIC DNA] OF 135-217</scope>
</reference>
<reference key="7">
    <citation type="journal article" date="1988" name="EMBO J.">
        <title>Expression of multiple homeobox genes within diverse mammalian haemopoietic lineages.</title>
        <authorList>
            <person name="Kongsuwan K."/>
            <person name="Webb E."/>
            <person name="Housiaux P."/>
            <person name="Adams J.M."/>
        </authorList>
    </citation>
    <scope>NUCLEOTIDE SEQUENCE [MRNA] OF 137-196</scope>
</reference>
<reference key="8">
    <citation type="journal article" date="1995" name="Mol. Cell. Biol.">
        <title>Both Pbx1 and E2A-Pbx1 bind the DNA motif ATCAATCAA cooperatively with the products of multiple murine Hox genes, some of which are themselves oncogenes.</title>
        <authorList>
            <person name="Lu Q."/>
            <person name="Knoepfler P.S."/>
            <person name="Scheele J."/>
            <person name="Wright D.D."/>
            <person name="Kamps M.P."/>
        </authorList>
    </citation>
    <scope>INTERACTION WITH PBX1</scope>
</reference>
<dbReference type="EMBL" id="Y00436">
    <property type="protein sequence ID" value="CAA68494.1"/>
    <property type="molecule type" value="Genomic_DNA"/>
</dbReference>
<dbReference type="EMBL" id="X06762">
    <property type="protein sequence ID" value="CAA29934.1"/>
    <property type="molecule type" value="mRNA"/>
</dbReference>
<dbReference type="EMBL" id="AK136706">
    <property type="protein sequence ID" value="BAE23104.1"/>
    <property type="molecule type" value="mRNA"/>
</dbReference>
<dbReference type="EMBL" id="AL645478">
    <property type="status" value="NOT_ANNOTATED_CDS"/>
    <property type="molecule type" value="Genomic_DNA"/>
</dbReference>
<dbReference type="EMBL" id="M18167">
    <property type="protein sequence ID" value="AAA37845.1"/>
    <property type="status" value="ALT_SEQ"/>
    <property type="molecule type" value="Genomic_DNA"/>
</dbReference>
<dbReference type="EMBL" id="M18400">
    <property type="protein sequence ID" value="AAA88245.1"/>
    <property type="molecule type" value="Genomic_DNA"/>
</dbReference>
<dbReference type="EMBL" id="X14570">
    <property type="protein sequence ID" value="CAA32708.1"/>
    <property type="molecule type" value="mRNA"/>
</dbReference>
<dbReference type="CCDS" id="CCDS25294.1"/>
<dbReference type="PIR" id="A26846">
    <property type="entry name" value="WJMSX2"/>
</dbReference>
<dbReference type="RefSeq" id="NP_034590.2">
    <property type="nucleotide sequence ID" value="NM_010460.2"/>
</dbReference>
<dbReference type="RefSeq" id="XP_030101452.1">
    <property type="nucleotide sequence ID" value="XM_030245592.2"/>
</dbReference>
<dbReference type="SMR" id="P09024"/>
<dbReference type="BioGRID" id="200381">
    <property type="interactions" value="1"/>
</dbReference>
<dbReference type="FunCoup" id="P09024">
    <property type="interactions" value="1538"/>
</dbReference>
<dbReference type="IntAct" id="P09024">
    <property type="interactions" value="1"/>
</dbReference>
<dbReference type="STRING" id="10090.ENSMUSP00000040121"/>
<dbReference type="iPTMnet" id="P09024"/>
<dbReference type="PhosphoSitePlus" id="P09024"/>
<dbReference type="SwissPalm" id="P09024"/>
<dbReference type="PaxDb" id="10090-ENSMUSP00000040121"/>
<dbReference type="ProteomicsDB" id="273230"/>
<dbReference type="Antibodypedia" id="68878">
    <property type="antibodies" value="363 antibodies from 32 providers"/>
</dbReference>
<dbReference type="DNASU" id="15415"/>
<dbReference type="Ensembl" id="ENSMUST00000049352.8">
    <property type="protein sequence ID" value="ENSMUSP00000040121.7"/>
    <property type="gene ID" value="ENSMUSG00000038721.9"/>
</dbReference>
<dbReference type="GeneID" id="15415"/>
<dbReference type="KEGG" id="mmu:15415"/>
<dbReference type="UCSC" id="uc007lbr.1">
    <property type="organism name" value="mouse"/>
</dbReference>
<dbReference type="AGR" id="MGI:96188"/>
<dbReference type="CTD" id="3217"/>
<dbReference type="MGI" id="MGI:96188">
    <property type="gene designation" value="Hoxb7"/>
</dbReference>
<dbReference type="VEuPathDB" id="HostDB:ENSMUSG00000038721"/>
<dbReference type="eggNOG" id="KOG0489">
    <property type="taxonomic scope" value="Eukaryota"/>
</dbReference>
<dbReference type="GeneTree" id="ENSGT00940000161230"/>
<dbReference type="HOGENOM" id="CLU_061398_1_1_1"/>
<dbReference type="InParanoid" id="P09024"/>
<dbReference type="OMA" id="QNCNKTD"/>
<dbReference type="OrthoDB" id="6159439at2759"/>
<dbReference type="PhylomeDB" id="P09024"/>
<dbReference type="TreeFam" id="TF316310"/>
<dbReference type="BioGRID-ORCS" id="15415">
    <property type="hits" value="1 hit in 79 CRISPR screens"/>
</dbReference>
<dbReference type="PRO" id="PR:P09024"/>
<dbReference type="Proteomes" id="UP000000589">
    <property type="component" value="Chromosome 11"/>
</dbReference>
<dbReference type="RNAct" id="P09024">
    <property type="molecule type" value="protein"/>
</dbReference>
<dbReference type="Bgee" id="ENSMUSG00000038721">
    <property type="expression patterns" value="Expressed in embryonic post-anal tail and 86 other cell types or tissues"/>
</dbReference>
<dbReference type="GO" id="GO:0005829">
    <property type="term" value="C:cytosol"/>
    <property type="evidence" value="ECO:0007669"/>
    <property type="project" value="Ensembl"/>
</dbReference>
<dbReference type="GO" id="GO:0016604">
    <property type="term" value="C:nuclear body"/>
    <property type="evidence" value="ECO:0007669"/>
    <property type="project" value="Ensembl"/>
</dbReference>
<dbReference type="GO" id="GO:0003677">
    <property type="term" value="F:DNA binding"/>
    <property type="evidence" value="ECO:0000314"/>
    <property type="project" value="MGI"/>
</dbReference>
<dbReference type="GO" id="GO:0001228">
    <property type="term" value="F:DNA-binding transcription activator activity, RNA polymerase II-specific"/>
    <property type="evidence" value="ECO:0007669"/>
    <property type="project" value="Ensembl"/>
</dbReference>
<dbReference type="GO" id="GO:0000978">
    <property type="term" value="F:RNA polymerase II cis-regulatory region sequence-specific DNA binding"/>
    <property type="evidence" value="ECO:0007669"/>
    <property type="project" value="Ensembl"/>
</dbReference>
<dbReference type="GO" id="GO:0009952">
    <property type="term" value="P:anterior/posterior pattern specification"/>
    <property type="evidence" value="ECO:0000315"/>
    <property type="project" value="MGI"/>
</dbReference>
<dbReference type="GO" id="GO:0048704">
    <property type="term" value="P:embryonic skeletal system morphogenesis"/>
    <property type="evidence" value="ECO:0000315"/>
    <property type="project" value="MGI"/>
</dbReference>
<dbReference type="GO" id="GO:0030099">
    <property type="term" value="P:myeloid cell differentiation"/>
    <property type="evidence" value="ECO:0000315"/>
    <property type="project" value="MGI"/>
</dbReference>
<dbReference type="GO" id="GO:0090190">
    <property type="term" value="P:positive regulation of branching involved in ureteric bud morphogenesis"/>
    <property type="evidence" value="ECO:0000315"/>
    <property type="project" value="UniProtKB"/>
</dbReference>
<dbReference type="CDD" id="cd00086">
    <property type="entry name" value="homeodomain"/>
    <property type="match status" value="1"/>
</dbReference>
<dbReference type="FunFam" id="1.10.10.60:FF:000017">
    <property type="entry name" value="Homeobox protein antennapedia"/>
    <property type="match status" value="1"/>
</dbReference>
<dbReference type="Gene3D" id="1.10.10.60">
    <property type="entry name" value="Homeodomain-like"/>
    <property type="match status" value="1"/>
</dbReference>
<dbReference type="InterPro" id="IPR050296">
    <property type="entry name" value="Antp_homeobox"/>
</dbReference>
<dbReference type="InterPro" id="IPR001356">
    <property type="entry name" value="HD"/>
</dbReference>
<dbReference type="InterPro" id="IPR020479">
    <property type="entry name" value="HD_metazoa"/>
</dbReference>
<dbReference type="InterPro" id="IPR017995">
    <property type="entry name" value="Homeobox_antennapedia"/>
</dbReference>
<dbReference type="InterPro" id="IPR001827">
    <property type="entry name" value="Homeobox_Antennapedia_CS"/>
</dbReference>
<dbReference type="InterPro" id="IPR017970">
    <property type="entry name" value="Homeobox_CS"/>
</dbReference>
<dbReference type="InterPro" id="IPR009057">
    <property type="entry name" value="Homeodomain-like_sf"/>
</dbReference>
<dbReference type="PANTHER" id="PTHR45659">
    <property type="entry name" value="HOMEOBOX PROTEIN HOX"/>
    <property type="match status" value="1"/>
</dbReference>
<dbReference type="PANTHER" id="PTHR45659:SF11">
    <property type="entry name" value="HOMEOBOX PROTEIN HOX-B7"/>
    <property type="match status" value="1"/>
</dbReference>
<dbReference type="Pfam" id="PF00046">
    <property type="entry name" value="Homeodomain"/>
    <property type="match status" value="1"/>
</dbReference>
<dbReference type="PRINTS" id="PR00025">
    <property type="entry name" value="ANTENNAPEDIA"/>
</dbReference>
<dbReference type="PRINTS" id="PR00024">
    <property type="entry name" value="HOMEOBOX"/>
</dbReference>
<dbReference type="SMART" id="SM00389">
    <property type="entry name" value="HOX"/>
    <property type="match status" value="1"/>
</dbReference>
<dbReference type="SUPFAM" id="SSF46689">
    <property type="entry name" value="Homeodomain-like"/>
    <property type="match status" value="1"/>
</dbReference>
<dbReference type="PROSITE" id="PS00032">
    <property type="entry name" value="ANTENNAPEDIA"/>
    <property type="match status" value="1"/>
</dbReference>
<dbReference type="PROSITE" id="PS00027">
    <property type="entry name" value="HOMEOBOX_1"/>
    <property type="match status" value="1"/>
</dbReference>
<dbReference type="PROSITE" id="PS50071">
    <property type="entry name" value="HOMEOBOX_2"/>
    <property type="match status" value="1"/>
</dbReference>
<feature type="chain" id="PRO_0000200143" description="Homeobox protein Hox-B7">
    <location>
        <begin position="1"/>
        <end position="217"/>
    </location>
</feature>
<feature type="DNA-binding region" description="Homeobox" evidence="1">
    <location>
        <begin position="137"/>
        <end position="196"/>
    </location>
</feature>
<feature type="region of interest" description="Disordered" evidence="2">
    <location>
        <begin position="192"/>
        <end position="217"/>
    </location>
</feature>
<feature type="short sequence motif" description="Antp-type hexapeptide">
    <location>
        <begin position="126"/>
        <end position="131"/>
    </location>
</feature>
<feature type="sequence conflict" description="In Ref. 1 and 2." evidence="4" ref="1 2">
    <original>P</original>
    <variation>A</variation>
    <location>
        <position position="104"/>
    </location>
</feature>
<feature type="sequence conflict" description="In Ref. 1 and 2." evidence="4" ref="1 2">
    <original>A</original>
    <variation>G</variation>
    <location>
        <position position="108"/>
    </location>
</feature>
<feature type="sequence conflict" description="In Ref. 3; BAE23104." evidence="4" ref="3">
    <original>Y</original>
    <variation>S</variation>
    <location>
        <position position="144"/>
    </location>
</feature>
<feature type="sequence conflict" description="In Ref. 5; AAA37845." evidence="4" ref="5">
    <original>Q</original>
    <variation>H</variation>
    <location>
        <position position="206"/>
    </location>
</feature>
<feature type="sequence conflict" description="In Ref. 1 and 2." evidence="4" ref="1 2">
    <original>A</original>
    <variation>G</variation>
    <location>
        <position position="211"/>
    </location>
</feature>
<feature type="sequence conflict" description="In Ref. 6; AAA88245." evidence="4" ref="6">
    <original>A</original>
    <variation>R</variation>
    <location>
        <position position="211"/>
    </location>
</feature>
<comment type="function">
    <text>Sequence-specific transcription factor which is part of a developmental regulatory system that provides cells with specific positional identities on the anterior-posterior axis.</text>
</comment>
<comment type="subunit">
    <text evidence="3">Forms a DNA-binding heterodimer with transcription factor PBX1.</text>
</comment>
<comment type="subcellular location">
    <subcellularLocation>
        <location>Nucleus</location>
    </subcellularLocation>
</comment>
<comment type="similarity">
    <text evidence="4">Belongs to the Antp homeobox family.</text>
</comment>
<name>HXB7_MOUSE</name>
<gene>
    <name type="primary">Hoxb7</name>
    <name type="synonym">Hox-2.3</name>
    <name type="synonym">Hoxb-7</name>
</gene>
<evidence type="ECO:0000255" key="1">
    <source>
        <dbReference type="PROSITE-ProRule" id="PRU00108"/>
    </source>
</evidence>
<evidence type="ECO:0000256" key="2">
    <source>
        <dbReference type="SAM" id="MobiDB-lite"/>
    </source>
</evidence>
<evidence type="ECO:0000269" key="3">
    <source>
    </source>
</evidence>
<evidence type="ECO:0000305" key="4"/>
<protein>
    <recommendedName>
        <fullName>Homeobox protein Hox-B7</fullName>
    </recommendedName>
    <alternativeName>
        <fullName>Homeobox protein Hox-2.3</fullName>
    </alternativeName>
    <alternativeName>
        <fullName>Homeobox protein MH-22B</fullName>
    </alternativeName>
    <alternativeName>
        <fullName>Homeobox protein MuB1</fullName>
    </alternativeName>
</protein>